<feature type="chain" id="PRO_0000427472" description="Uncharacterized protein MT2259">
    <location>
        <begin position="1"/>
        <end position="230"/>
    </location>
</feature>
<feature type="transmembrane region" description="Helical" evidence="1">
    <location>
        <begin position="75"/>
        <end position="95"/>
    </location>
</feature>
<feature type="region of interest" description="Disordered" evidence="2">
    <location>
        <begin position="1"/>
        <end position="57"/>
    </location>
</feature>
<feature type="compositionally biased region" description="Low complexity" evidence="2">
    <location>
        <begin position="38"/>
        <end position="55"/>
    </location>
</feature>
<reference key="1">
    <citation type="journal article" date="2002" name="J. Bacteriol.">
        <title>Whole-genome comparison of Mycobacterium tuberculosis clinical and laboratory strains.</title>
        <authorList>
            <person name="Fleischmann R.D."/>
            <person name="Alland D."/>
            <person name="Eisen J.A."/>
            <person name="Carpenter L."/>
            <person name="White O."/>
            <person name="Peterson J.D."/>
            <person name="DeBoy R.T."/>
            <person name="Dodson R.J."/>
            <person name="Gwinn M.L."/>
            <person name="Haft D.H."/>
            <person name="Hickey E.K."/>
            <person name="Kolonay J.F."/>
            <person name="Nelson W.C."/>
            <person name="Umayam L.A."/>
            <person name="Ermolaeva M.D."/>
            <person name="Salzberg S.L."/>
            <person name="Delcher A."/>
            <person name="Utterback T.R."/>
            <person name="Weidman J.F."/>
            <person name="Khouri H.M."/>
            <person name="Gill J."/>
            <person name="Mikula A."/>
            <person name="Bishai W."/>
            <person name="Jacobs W.R. Jr."/>
            <person name="Venter J.C."/>
            <person name="Fraser C.M."/>
        </authorList>
    </citation>
    <scope>NUCLEOTIDE SEQUENCE [LARGE SCALE GENOMIC DNA]</scope>
    <source>
        <strain>CDC 1551 / Oshkosh</strain>
    </source>
</reference>
<name>Y2203_MYCTO</name>
<dbReference type="EMBL" id="AE000516">
    <property type="protein sequence ID" value="AAK46545.1"/>
    <property type="molecule type" value="Genomic_DNA"/>
</dbReference>
<dbReference type="PIR" id="D70785">
    <property type="entry name" value="D70785"/>
</dbReference>
<dbReference type="RefSeq" id="WP_003411415.1">
    <property type="nucleotide sequence ID" value="NZ_KK341227.1"/>
</dbReference>
<dbReference type="SMR" id="P9WLI6"/>
<dbReference type="KEGG" id="mtc:MT2259"/>
<dbReference type="PATRIC" id="fig|83331.31.peg.2434"/>
<dbReference type="HOGENOM" id="CLU_088216_0_0_11"/>
<dbReference type="Proteomes" id="UP000001020">
    <property type="component" value="Chromosome"/>
</dbReference>
<dbReference type="GO" id="GO:0016020">
    <property type="term" value="C:membrane"/>
    <property type="evidence" value="ECO:0007669"/>
    <property type="project" value="UniProtKB-SubCell"/>
</dbReference>
<gene>
    <name type="ordered locus">MT2259</name>
</gene>
<protein>
    <recommendedName>
        <fullName>Uncharacterized protein MT2259</fullName>
    </recommendedName>
</protein>
<comment type="subcellular location">
    <subcellularLocation>
        <location evidence="3">Membrane</location>
        <topology evidence="3">Single-pass membrane protein</topology>
    </subcellularLocation>
</comment>
<sequence length="230" mass="24372">MPGPHSPNPGVGTNGPAPYPEPSSHEPQALDYPHDLGAAEPAFAPGPADDAALPPAAYPGVPPQVSYPKRRHKRLLIGIVVALALVSAMTAAIIYGVRTNGANTAGTFSEGPAKTAIQGYLNALENRDVDTIVRNALCGIHDGVRDKRSDQALAKLSSDAFRKQFSQVEVTSIDKIVYWSQYQAQVLFTMQVTPAAGGPPRGQVQGIAQLLFQRGQVLVCSYVLRTAGSY</sequence>
<accession>P9WLI6</accession>
<accession>L0T950</accession>
<accession>P64949</accession>
<accession>Q10392</accession>
<proteinExistence type="predicted"/>
<keyword id="KW-0472">Membrane</keyword>
<keyword id="KW-1185">Reference proteome</keyword>
<keyword id="KW-0812">Transmembrane</keyword>
<keyword id="KW-1133">Transmembrane helix</keyword>
<evidence type="ECO:0000255" key="1"/>
<evidence type="ECO:0000256" key="2">
    <source>
        <dbReference type="SAM" id="MobiDB-lite"/>
    </source>
</evidence>
<evidence type="ECO:0000305" key="3"/>
<organism>
    <name type="scientific">Mycobacterium tuberculosis (strain CDC 1551 / Oshkosh)</name>
    <dbReference type="NCBI Taxonomy" id="83331"/>
    <lineage>
        <taxon>Bacteria</taxon>
        <taxon>Bacillati</taxon>
        <taxon>Actinomycetota</taxon>
        <taxon>Actinomycetes</taxon>
        <taxon>Mycobacteriales</taxon>
        <taxon>Mycobacteriaceae</taxon>
        <taxon>Mycobacterium</taxon>
        <taxon>Mycobacterium tuberculosis complex</taxon>
    </lineage>
</organism>